<comment type="function">
    <text evidence="1">Participates in chromosomal partition during cell division. May act via the formation of a condensin-like complex containing Smc and ScpA that pull DNA away from mid-cell into both cell halves.</text>
</comment>
<comment type="subunit">
    <text evidence="1">Homodimer. Homodimerization may be required to stabilize the binding of ScpA to the Smc head domains. Component of a cohesin-like complex composed of ScpA, ScpB and the Smc homodimer, in which ScpA and ScpB bind to the head domain of Smc. The presence of the three proteins is required for the association of the complex with DNA.</text>
</comment>
<comment type="subcellular location">
    <subcellularLocation>
        <location evidence="1">Cytoplasm</location>
    </subcellularLocation>
    <text evidence="1">Associated with two foci at the outer edges of the nucleoid region in young cells, and at four foci within both cell halves in older cells.</text>
</comment>
<comment type="similarity">
    <text evidence="1">Belongs to the ScpB family.</text>
</comment>
<comment type="sequence caution" evidence="2">
    <conflict type="erroneous initiation">
        <sequence resource="EMBL-CDS" id="AAK05374"/>
    </conflict>
</comment>
<accession>Q9CG34</accession>
<protein>
    <recommendedName>
        <fullName evidence="1">Segregation and condensation protein B</fullName>
    </recommendedName>
</protein>
<dbReference type="EMBL" id="AE005176">
    <property type="protein sequence ID" value="AAK05374.1"/>
    <property type="status" value="ALT_INIT"/>
    <property type="molecule type" value="Genomic_DNA"/>
</dbReference>
<dbReference type="PIR" id="D86784">
    <property type="entry name" value="D86784"/>
</dbReference>
<dbReference type="RefSeq" id="NP_267432.2">
    <property type="nucleotide sequence ID" value="NC_002662.1"/>
</dbReference>
<dbReference type="RefSeq" id="WP_010905863.1">
    <property type="nucleotide sequence ID" value="NC_002662.1"/>
</dbReference>
<dbReference type="SMR" id="Q9CG34"/>
<dbReference type="PaxDb" id="272623-L108430"/>
<dbReference type="EnsemblBacteria" id="AAK05374">
    <property type="protein sequence ID" value="AAK05374"/>
    <property type="gene ID" value="L108430"/>
</dbReference>
<dbReference type="KEGG" id="lla:L108430"/>
<dbReference type="PATRIC" id="fig|272623.7.peg.1379"/>
<dbReference type="eggNOG" id="COG1386">
    <property type="taxonomic scope" value="Bacteria"/>
</dbReference>
<dbReference type="HOGENOM" id="CLU_045647_5_3_9"/>
<dbReference type="OrthoDB" id="9806226at2"/>
<dbReference type="Proteomes" id="UP000002196">
    <property type="component" value="Chromosome"/>
</dbReference>
<dbReference type="GO" id="GO:0005737">
    <property type="term" value="C:cytoplasm"/>
    <property type="evidence" value="ECO:0007669"/>
    <property type="project" value="UniProtKB-SubCell"/>
</dbReference>
<dbReference type="GO" id="GO:0051301">
    <property type="term" value="P:cell division"/>
    <property type="evidence" value="ECO:0007669"/>
    <property type="project" value="UniProtKB-KW"/>
</dbReference>
<dbReference type="GO" id="GO:0051304">
    <property type="term" value="P:chromosome separation"/>
    <property type="evidence" value="ECO:0007669"/>
    <property type="project" value="InterPro"/>
</dbReference>
<dbReference type="GO" id="GO:0006260">
    <property type="term" value="P:DNA replication"/>
    <property type="evidence" value="ECO:0007669"/>
    <property type="project" value="UniProtKB-UniRule"/>
</dbReference>
<dbReference type="Gene3D" id="1.10.10.10">
    <property type="entry name" value="Winged helix-like DNA-binding domain superfamily/Winged helix DNA-binding domain"/>
    <property type="match status" value="2"/>
</dbReference>
<dbReference type="HAMAP" id="MF_01804">
    <property type="entry name" value="ScpB"/>
    <property type="match status" value="1"/>
</dbReference>
<dbReference type="InterPro" id="IPR005234">
    <property type="entry name" value="ScpB_csome_segregation"/>
</dbReference>
<dbReference type="InterPro" id="IPR036388">
    <property type="entry name" value="WH-like_DNA-bd_sf"/>
</dbReference>
<dbReference type="InterPro" id="IPR036390">
    <property type="entry name" value="WH_DNA-bd_sf"/>
</dbReference>
<dbReference type="NCBIfam" id="TIGR00281">
    <property type="entry name" value="SMC-Scp complex subunit ScpB"/>
    <property type="match status" value="1"/>
</dbReference>
<dbReference type="PANTHER" id="PTHR34298">
    <property type="entry name" value="SEGREGATION AND CONDENSATION PROTEIN B"/>
    <property type="match status" value="1"/>
</dbReference>
<dbReference type="PANTHER" id="PTHR34298:SF2">
    <property type="entry name" value="SEGREGATION AND CONDENSATION PROTEIN B"/>
    <property type="match status" value="1"/>
</dbReference>
<dbReference type="Pfam" id="PF04079">
    <property type="entry name" value="SMC_ScpB"/>
    <property type="match status" value="1"/>
</dbReference>
<dbReference type="PIRSF" id="PIRSF019345">
    <property type="entry name" value="ScpB"/>
    <property type="match status" value="1"/>
</dbReference>
<dbReference type="SUPFAM" id="SSF46785">
    <property type="entry name" value="Winged helix' DNA-binding domain"/>
    <property type="match status" value="2"/>
</dbReference>
<organism>
    <name type="scientific">Lactococcus lactis subsp. lactis (strain IL1403)</name>
    <name type="common">Streptococcus lactis</name>
    <dbReference type="NCBI Taxonomy" id="272623"/>
    <lineage>
        <taxon>Bacteria</taxon>
        <taxon>Bacillati</taxon>
        <taxon>Bacillota</taxon>
        <taxon>Bacilli</taxon>
        <taxon>Lactobacillales</taxon>
        <taxon>Streptococcaceae</taxon>
        <taxon>Lactococcus</taxon>
    </lineage>
</organism>
<sequence>MNKTASCELLLFVSGEAGLTLAELSALTEMSKQACQQQIDYLKEKYHSDEESALTIIETAGKYRMATKEEFAEILKNYAKTPLNQSLSKSALEVLSIIAYKQPLTRLEIDHLRGVNSSGVLSTLRAFDLVEKVGQVEAPGRPSLYATTDFFLDYIGINHLDELPEIDESRFIAEEQTLFNESEENENQ</sequence>
<reference key="1">
    <citation type="journal article" date="2001" name="Genome Res.">
        <title>The complete genome sequence of the lactic acid bacterium Lactococcus lactis ssp. lactis IL1403.</title>
        <authorList>
            <person name="Bolotin A."/>
            <person name="Wincker P."/>
            <person name="Mauger S."/>
            <person name="Jaillon O."/>
            <person name="Malarme K."/>
            <person name="Weissenbach J."/>
            <person name="Ehrlich S.D."/>
            <person name="Sorokin A."/>
        </authorList>
    </citation>
    <scope>NUCLEOTIDE SEQUENCE [LARGE SCALE GENOMIC DNA]</scope>
    <source>
        <strain>IL1403</strain>
    </source>
</reference>
<proteinExistence type="inferred from homology"/>
<evidence type="ECO:0000255" key="1">
    <source>
        <dbReference type="HAMAP-Rule" id="MF_01804"/>
    </source>
</evidence>
<evidence type="ECO:0000305" key="2"/>
<keyword id="KW-0131">Cell cycle</keyword>
<keyword id="KW-0132">Cell division</keyword>
<keyword id="KW-0159">Chromosome partition</keyword>
<keyword id="KW-0963">Cytoplasm</keyword>
<keyword id="KW-1185">Reference proteome</keyword>
<gene>
    <name evidence="1" type="primary">scpB</name>
    <name type="ordered locus">LL1276</name>
    <name type="ORF">L108430</name>
</gene>
<feature type="chain" id="PRO_0000211133" description="Segregation and condensation protein B">
    <location>
        <begin position="1"/>
        <end position="188"/>
    </location>
</feature>
<name>SCPB_LACLA</name>